<feature type="chain" id="PRO_0000445351" description="MFS transporter PfmaC">
    <location>
        <begin position="1"/>
        <end position="530"/>
    </location>
</feature>
<feature type="transmembrane region" description="Helical" evidence="1">
    <location>
        <begin position="165"/>
        <end position="182"/>
    </location>
</feature>
<feature type="transmembrane region" description="Helical" evidence="1">
    <location>
        <begin position="195"/>
        <end position="215"/>
    </location>
</feature>
<feature type="transmembrane region" description="Helical" evidence="1">
    <location>
        <begin position="226"/>
        <end position="246"/>
    </location>
</feature>
<feature type="transmembrane region" description="Helical" evidence="1">
    <location>
        <begin position="261"/>
        <end position="281"/>
    </location>
</feature>
<feature type="transmembrane region" description="Helical" evidence="1">
    <location>
        <begin position="324"/>
        <end position="344"/>
    </location>
</feature>
<feature type="transmembrane region" description="Helical" evidence="1">
    <location>
        <begin position="369"/>
        <end position="389"/>
    </location>
</feature>
<feature type="transmembrane region" description="Helical" evidence="1">
    <location>
        <begin position="396"/>
        <end position="416"/>
    </location>
</feature>
<feature type="transmembrane region" description="Helical" evidence="1">
    <location>
        <begin position="422"/>
        <end position="442"/>
    </location>
</feature>
<feature type="transmembrane region" description="Helical" evidence="1">
    <location>
        <begin position="456"/>
        <end position="476"/>
    </location>
</feature>
<feature type="transmembrane region" description="Helical" evidence="1">
    <location>
        <begin position="493"/>
        <end position="513"/>
    </location>
</feature>
<feature type="region of interest" description="Disordered" evidence="2">
    <location>
        <begin position="41"/>
        <end position="76"/>
    </location>
</feature>
<feature type="compositionally biased region" description="Polar residues" evidence="2">
    <location>
        <begin position="42"/>
        <end position="56"/>
    </location>
</feature>
<feature type="compositionally biased region" description="Low complexity" evidence="2">
    <location>
        <begin position="59"/>
        <end position="69"/>
    </location>
</feature>
<name>PFMAC_PESFW</name>
<organism>
    <name type="scientific">Pestalotiopsis fici (strain W106-1 / CGMCC3.15140)</name>
    <dbReference type="NCBI Taxonomy" id="1229662"/>
    <lineage>
        <taxon>Eukaryota</taxon>
        <taxon>Fungi</taxon>
        <taxon>Dikarya</taxon>
        <taxon>Ascomycota</taxon>
        <taxon>Pezizomycotina</taxon>
        <taxon>Sordariomycetes</taxon>
        <taxon>Xylariomycetidae</taxon>
        <taxon>Amphisphaeriales</taxon>
        <taxon>Sporocadaceae</taxon>
        <taxon>Pestalotiopsis</taxon>
    </lineage>
</organism>
<keyword id="KW-1003">Cell membrane</keyword>
<keyword id="KW-0470">Melanin biosynthesis</keyword>
<keyword id="KW-0472">Membrane</keyword>
<keyword id="KW-1185">Reference proteome</keyword>
<keyword id="KW-0812">Transmembrane</keyword>
<keyword id="KW-1133">Transmembrane helix</keyword>
<keyword id="KW-0813">Transport</keyword>
<proteinExistence type="evidence at transcript level"/>
<protein>
    <recommendedName>
        <fullName evidence="4">MFS transporter PfmaC</fullName>
    </recommendedName>
    <alternativeName>
        <fullName evidence="4">Conidial pigment biosynthesis cluster protein B</fullName>
    </alternativeName>
</protein>
<reference key="1">
    <citation type="journal article" date="2015" name="BMC Genomics">
        <title>Genomic and transcriptomic analysis of the endophytic fungus Pestalotiopsis fici reveals its lifestyle and high potential for synthesis of natural products.</title>
        <authorList>
            <person name="Wang X."/>
            <person name="Zhang X."/>
            <person name="Liu L."/>
            <person name="Xiang M."/>
            <person name="Wang W."/>
            <person name="Sun X."/>
            <person name="Che Y."/>
            <person name="Guo L."/>
            <person name="Liu G."/>
            <person name="Guo L."/>
            <person name="Wang C."/>
            <person name="Yin W.B."/>
            <person name="Stadler M."/>
            <person name="Zhang X."/>
            <person name="Liu X."/>
        </authorList>
    </citation>
    <scope>NUCLEOTIDE SEQUENCE [LARGE SCALE GENOMIC DNA]</scope>
    <source>
        <strain>W106-1 / CGMCC3.15140</strain>
    </source>
</reference>
<reference key="2">
    <citation type="journal article" date="2017" name="Mol. Microbiol.">
        <title>A cryptic pigment biosynthetic pathway uncovered by heterologous expression is essential for conidial development in Pestalotiopsis fici.</title>
        <authorList>
            <person name="Zhang P."/>
            <person name="Wang X."/>
            <person name="Fan A."/>
            <person name="Zheng Y."/>
            <person name="Liu X."/>
            <person name="Wang S."/>
            <person name="Zou H."/>
            <person name="Oakley B.R."/>
            <person name="Keller N.P."/>
            <person name="Yin W.B."/>
        </authorList>
    </citation>
    <scope>FUNCTION</scope>
    <scope>DISRUPTION PHENOTYPE</scope>
    <scope>INDUCTION</scope>
</reference>
<dbReference type="EMBL" id="KI912112">
    <property type="protein sequence ID" value="ETS82097.1"/>
    <property type="molecule type" value="Genomic_DNA"/>
</dbReference>
<dbReference type="RefSeq" id="XP_007833871.1">
    <property type="nucleotide sequence ID" value="XM_007835680.1"/>
</dbReference>
<dbReference type="SMR" id="W3X9K4"/>
<dbReference type="GeneID" id="19272112"/>
<dbReference type="KEGG" id="pfy:PFICI_07099"/>
<dbReference type="eggNOG" id="KOG2533">
    <property type="taxonomic scope" value="Eukaryota"/>
</dbReference>
<dbReference type="HOGENOM" id="CLU_001265_4_2_1"/>
<dbReference type="InParanoid" id="W3X9K4"/>
<dbReference type="OMA" id="WMNTYFN"/>
<dbReference type="OrthoDB" id="3639251at2759"/>
<dbReference type="Proteomes" id="UP000030651">
    <property type="component" value="Unassembled WGS sequence"/>
</dbReference>
<dbReference type="GO" id="GO:0005886">
    <property type="term" value="C:plasma membrane"/>
    <property type="evidence" value="ECO:0007669"/>
    <property type="project" value="UniProtKB-SubCell"/>
</dbReference>
<dbReference type="GO" id="GO:0022857">
    <property type="term" value="F:transmembrane transporter activity"/>
    <property type="evidence" value="ECO:0007669"/>
    <property type="project" value="InterPro"/>
</dbReference>
<dbReference type="GO" id="GO:0042438">
    <property type="term" value="P:melanin biosynthetic process"/>
    <property type="evidence" value="ECO:0007669"/>
    <property type="project" value="UniProtKB-KW"/>
</dbReference>
<dbReference type="FunFam" id="1.20.1250.20:FF:000386">
    <property type="entry name" value="MFS general substrate transporter"/>
    <property type="match status" value="1"/>
</dbReference>
<dbReference type="FunFam" id="1.20.1250.20:FF:000065">
    <property type="entry name" value="Putative MFS pantothenate transporter"/>
    <property type="match status" value="1"/>
</dbReference>
<dbReference type="Gene3D" id="1.20.1250.20">
    <property type="entry name" value="MFS general substrate transporter like domains"/>
    <property type="match status" value="2"/>
</dbReference>
<dbReference type="InterPro" id="IPR011701">
    <property type="entry name" value="MFS"/>
</dbReference>
<dbReference type="InterPro" id="IPR020846">
    <property type="entry name" value="MFS_dom"/>
</dbReference>
<dbReference type="InterPro" id="IPR036259">
    <property type="entry name" value="MFS_trans_sf"/>
</dbReference>
<dbReference type="InterPro" id="IPR005829">
    <property type="entry name" value="Sugar_transporter_CS"/>
</dbReference>
<dbReference type="PANTHER" id="PTHR43791">
    <property type="entry name" value="PERMEASE-RELATED"/>
    <property type="match status" value="1"/>
</dbReference>
<dbReference type="PANTHER" id="PTHR43791:SF39">
    <property type="entry name" value="TRANSPORTER LIZ1_SEO1, PUTATIVE (AFU_ORTHOLOGUE AFUA_3G00980)-RELATED"/>
    <property type="match status" value="1"/>
</dbReference>
<dbReference type="Pfam" id="PF07690">
    <property type="entry name" value="MFS_1"/>
    <property type="match status" value="1"/>
</dbReference>
<dbReference type="SUPFAM" id="SSF103473">
    <property type="entry name" value="MFS general substrate transporter"/>
    <property type="match status" value="1"/>
</dbReference>
<dbReference type="PROSITE" id="PS50850">
    <property type="entry name" value="MFS"/>
    <property type="match status" value="1"/>
</dbReference>
<dbReference type="PROSITE" id="PS00216">
    <property type="entry name" value="SUGAR_TRANSPORT_1"/>
    <property type="match status" value="1"/>
</dbReference>
<evidence type="ECO:0000255" key="1"/>
<evidence type="ECO:0000256" key="2">
    <source>
        <dbReference type="SAM" id="MobiDB-lite"/>
    </source>
</evidence>
<evidence type="ECO:0000269" key="3">
    <source>
    </source>
</evidence>
<evidence type="ECO:0000303" key="4">
    <source>
    </source>
</evidence>
<evidence type="ECO:0000305" key="5"/>
<accession>W3X9K4</accession>
<gene>
    <name evidence="4" type="primary">PfmaC</name>
    <name type="ORF">PFICI_07099</name>
</gene>
<comment type="function">
    <text evidence="3">MFS transporter; part of the gene cluster that mediates the biosynthesis of dihydroxynaphthalene (DHN)-melanin, a bluish-green pigment forming a dark layer in the conidial wall that protects the conidia from UV radiations.</text>
</comment>
<comment type="subcellular location">
    <subcellularLocation>
        <location evidence="5">Cell membrane</location>
        <topology evidence="1">Multi-pass membrane protein</topology>
    </subcellularLocation>
</comment>
<comment type="induction">
    <text evidence="3">Expression is positively regulazed by the cluster-specific transcription factor pfmaF.</text>
</comment>
<comment type="disruption phenotype">
    <text evidence="3">Does not affect the production of scytalone.</text>
</comment>
<comment type="similarity">
    <text evidence="5">Belongs to the major facilitator superfamily. Allantoate permease family.</text>
</comment>
<sequence>MSGPALEVAAAKTAEQGQVPVLAAAVRGDTKVSGDSIHAATTAVSDGDNQSSTMSGKTAAGDATSPASGSGSGGWFHWHEPGTSKAEKKLIFKLDWFLLSYSCLCFFIKQLDGNNVTNAYASGMQEQLGFGPGNELSWMNTYFNIGQIIGAPFANMIITVVRPRYWLPACLMTWSAFVLGMYRCETAAQFYVLRFFIGLFEGAAWPGITYTLGCWYRKSEMARRSALFVMSGVLGQMFSGYLQAALYTGMDGKGGLAAWRWLFIFDFILAVPIAIYGLFCFPDTPHKTSAWYLNSWEREKAVERIDSEGRKPIGKLDLSVFKRIFTSWQVYAFTLGYALWSLTVGSYVMQYFTLYLKATKEYTIPQINNIPTALGAVNFVTMLTTGFVSDKIGRRGPVCLAVGCVLIFTYSIFTAWNVPHRLLMAVFILNGVYGCYTPLLAGWVNECCGGDQQKRAFILGLMTSVGGAVVIPFQQLQFPSSQAPQFKQTHGWPSALAFVIALTCWTGLGIPLLQRRMEKQAKRNEAEHEA</sequence>